<comment type="function">
    <text evidence="1">Regulates the coordinated translation of type I collagen alpha-1 and alpha-2 mRNAs, CO1A1 and CO1A2. Stabilizes mRNAs through high-affinity binding of a stem-loop structure in their 5' UTR. This regulation requires VIM and MYH10 filaments, and the helicase DHX9 (By similarity).</text>
</comment>
<comment type="subunit">
    <text evidence="1">Interacts (via the HTH domain) with VIM/vimentin. Interacts (via C-terminus) with non-muscle myosin MYH10. Interacts (via C-terminus) with DHX9 (By similarity).</text>
</comment>
<comment type="subcellular location">
    <subcellularLocation>
        <location>Cytoplasm</location>
    </subcellularLocation>
    <subcellularLocation>
        <location>Nucleus</location>
    </subcellularLocation>
    <text evidence="1">Shuttles between the nucleus and the cytoplasm.</text>
</comment>
<comment type="tissue specificity">
    <text evidence="6">Expressed in numerous tissues. Highest expression in heart and brain, intermediate in kidney, skeletal muscle and testis, lowest expression in testis (at protein level).</text>
</comment>
<comment type="domain">
    <text evidence="1">The RRM domain mediates the association with collagen mRNAs stem-loops.</text>
</comment>
<proteinExistence type="evidence at protein level"/>
<name>LARP6_MOUSE</name>
<keyword id="KW-0007">Acetylation</keyword>
<keyword id="KW-0963">Cytoplasm</keyword>
<keyword id="KW-0539">Nucleus</keyword>
<keyword id="KW-0597">Phosphoprotein</keyword>
<keyword id="KW-1185">Reference proteome</keyword>
<keyword id="KW-0694">RNA-binding</keyword>
<keyword id="KW-0810">Translation regulation</keyword>
<sequence length="492" mass="54873">MAQLGEQTLPGPETTVQIRVAIQEAEDLEDLEEEDEGTSARAAGDPARYLSPGWGSASEEEPSRGHSSATTSGGENDREDLEPEWRPPDEELIRKLVDQIEFYFSDENLEKDAFLLKHVRRNKLGYVSVKLLTSFKKVKHLTRDWRTTAHALKYSVTLELNEDHRKVRRTTPVPLFPNENLPSKMLLVYDLHLSPKLWALATPQKNGRVQEKVMEHLLKLFGTFGVISSVRILKPGRELPPDIRRISSRYSQVGTQECAIVEFEEVDAAIKAHEFMVTESQSKENMKAVLIGMKPPKKKPLKDKNHDDEATAGTHLSRSLNKRVEELQYMGDESSANSSSDPESNPTSPMAGRRHAASNKLSPSGHQNIFLSPNASPCSSPWSSPLAQRKGVSRKSPLAEEGRLNFSTSPEIFRKCMDYSSDSSITPSGSPWVRRRRQAEMGTQEKSPGASPLLSRRMQTADGLPVGVLRLPRGPDNTRGFHGGHERGRACV</sequence>
<accession>Q8BN59</accession>
<accession>Q8C9A3</accession>
<accession>Q8CA51</accession>
<accession>Q9CTN3</accession>
<accession>Q9D3J0</accession>
<evidence type="ECO:0000250" key="1"/>
<evidence type="ECO:0000250" key="2">
    <source>
        <dbReference type="UniProtKB" id="Q9BRS8"/>
    </source>
</evidence>
<evidence type="ECO:0000255" key="3">
    <source>
        <dbReference type="PROSITE-ProRule" id="PRU00332"/>
    </source>
</evidence>
<evidence type="ECO:0000255" key="4">
    <source>
        <dbReference type="PROSITE-ProRule" id="PRU01287"/>
    </source>
</evidence>
<evidence type="ECO:0000256" key="5">
    <source>
        <dbReference type="SAM" id="MobiDB-lite"/>
    </source>
</evidence>
<evidence type="ECO:0000269" key="6">
    <source>
    </source>
</evidence>
<evidence type="ECO:0000305" key="7"/>
<evidence type="ECO:0007744" key="8">
    <source>
    </source>
</evidence>
<reference key="1">
    <citation type="journal article" date="2005" name="Science">
        <title>The transcriptional landscape of the mammalian genome.</title>
        <authorList>
            <person name="Carninci P."/>
            <person name="Kasukawa T."/>
            <person name="Katayama S."/>
            <person name="Gough J."/>
            <person name="Frith M.C."/>
            <person name="Maeda N."/>
            <person name="Oyama R."/>
            <person name="Ravasi T."/>
            <person name="Lenhard B."/>
            <person name="Wells C."/>
            <person name="Kodzius R."/>
            <person name="Shimokawa K."/>
            <person name="Bajic V.B."/>
            <person name="Brenner S.E."/>
            <person name="Batalov S."/>
            <person name="Forrest A.R."/>
            <person name="Zavolan M."/>
            <person name="Davis M.J."/>
            <person name="Wilming L.G."/>
            <person name="Aidinis V."/>
            <person name="Allen J.E."/>
            <person name="Ambesi-Impiombato A."/>
            <person name="Apweiler R."/>
            <person name="Aturaliya R.N."/>
            <person name="Bailey T.L."/>
            <person name="Bansal M."/>
            <person name="Baxter L."/>
            <person name="Beisel K.W."/>
            <person name="Bersano T."/>
            <person name="Bono H."/>
            <person name="Chalk A.M."/>
            <person name="Chiu K.P."/>
            <person name="Choudhary V."/>
            <person name="Christoffels A."/>
            <person name="Clutterbuck D.R."/>
            <person name="Crowe M.L."/>
            <person name="Dalla E."/>
            <person name="Dalrymple B.P."/>
            <person name="de Bono B."/>
            <person name="Della Gatta G."/>
            <person name="di Bernardo D."/>
            <person name="Down T."/>
            <person name="Engstrom P."/>
            <person name="Fagiolini M."/>
            <person name="Faulkner G."/>
            <person name="Fletcher C.F."/>
            <person name="Fukushima T."/>
            <person name="Furuno M."/>
            <person name="Futaki S."/>
            <person name="Gariboldi M."/>
            <person name="Georgii-Hemming P."/>
            <person name="Gingeras T.R."/>
            <person name="Gojobori T."/>
            <person name="Green R.E."/>
            <person name="Gustincich S."/>
            <person name="Harbers M."/>
            <person name="Hayashi Y."/>
            <person name="Hensch T.K."/>
            <person name="Hirokawa N."/>
            <person name="Hill D."/>
            <person name="Huminiecki L."/>
            <person name="Iacono M."/>
            <person name="Ikeo K."/>
            <person name="Iwama A."/>
            <person name="Ishikawa T."/>
            <person name="Jakt M."/>
            <person name="Kanapin A."/>
            <person name="Katoh M."/>
            <person name="Kawasawa Y."/>
            <person name="Kelso J."/>
            <person name="Kitamura H."/>
            <person name="Kitano H."/>
            <person name="Kollias G."/>
            <person name="Krishnan S.P."/>
            <person name="Kruger A."/>
            <person name="Kummerfeld S.K."/>
            <person name="Kurochkin I.V."/>
            <person name="Lareau L.F."/>
            <person name="Lazarevic D."/>
            <person name="Lipovich L."/>
            <person name="Liu J."/>
            <person name="Liuni S."/>
            <person name="McWilliam S."/>
            <person name="Madan Babu M."/>
            <person name="Madera M."/>
            <person name="Marchionni L."/>
            <person name="Matsuda H."/>
            <person name="Matsuzawa S."/>
            <person name="Miki H."/>
            <person name="Mignone F."/>
            <person name="Miyake S."/>
            <person name="Morris K."/>
            <person name="Mottagui-Tabar S."/>
            <person name="Mulder N."/>
            <person name="Nakano N."/>
            <person name="Nakauchi H."/>
            <person name="Ng P."/>
            <person name="Nilsson R."/>
            <person name="Nishiguchi S."/>
            <person name="Nishikawa S."/>
            <person name="Nori F."/>
            <person name="Ohara O."/>
            <person name="Okazaki Y."/>
            <person name="Orlando V."/>
            <person name="Pang K.C."/>
            <person name="Pavan W.J."/>
            <person name="Pavesi G."/>
            <person name="Pesole G."/>
            <person name="Petrovsky N."/>
            <person name="Piazza S."/>
            <person name="Reed J."/>
            <person name="Reid J.F."/>
            <person name="Ring B.Z."/>
            <person name="Ringwald M."/>
            <person name="Rost B."/>
            <person name="Ruan Y."/>
            <person name="Salzberg S.L."/>
            <person name="Sandelin A."/>
            <person name="Schneider C."/>
            <person name="Schoenbach C."/>
            <person name="Sekiguchi K."/>
            <person name="Semple C.A."/>
            <person name="Seno S."/>
            <person name="Sessa L."/>
            <person name="Sheng Y."/>
            <person name="Shibata Y."/>
            <person name="Shimada H."/>
            <person name="Shimada K."/>
            <person name="Silva D."/>
            <person name="Sinclair B."/>
            <person name="Sperling S."/>
            <person name="Stupka E."/>
            <person name="Sugiura K."/>
            <person name="Sultana R."/>
            <person name="Takenaka Y."/>
            <person name="Taki K."/>
            <person name="Tammoja K."/>
            <person name="Tan S.L."/>
            <person name="Tang S."/>
            <person name="Taylor M.S."/>
            <person name="Tegner J."/>
            <person name="Teichmann S.A."/>
            <person name="Ueda H.R."/>
            <person name="van Nimwegen E."/>
            <person name="Verardo R."/>
            <person name="Wei C.L."/>
            <person name="Yagi K."/>
            <person name="Yamanishi H."/>
            <person name="Zabarovsky E."/>
            <person name="Zhu S."/>
            <person name="Zimmer A."/>
            <person name="Hide W."/>
            <person name="Bult C."/>
            <person name="Grimmond S.M."/>
            <person name="Teasdale R.D."/>
            <person name="Liu E.T."/>
            <person name="Brusic V."/>
            <person name="Quackenbush J."/>
            <person name="Wahlestedt C."/>
            <person name="Mattick J.S."/>
            <person name="Hume D.A."/>
            <person name="Kai C."/>
            <person name="Sasaki D."/>
            <person name="Tomaru Y."/>
            <person name="Fukuda S."/>
            <person name="Kanamori-Katayama M."/>
            <person name="Suzuki M."/>
            <person name="Aoki J."/>
            <person name="Arakawa T."/>
            <person name="Iida J."/>
            <person name="Imamura K."/>
            <person name="Itoh M."/>
            <person name="Kato T."/>
            <person name="Kawaji H."/>
            <person name="Kawagashira N."/>
            <person name="Kawashima T."/>
            <person name="Kojima M."/>
            <person name="Kondo S."/>
            <person name="Konno H."/>
            <person name="Nakano K."/>
            <person name="Ninomiya N."/>
            <person name="Nishio T."/>
            <person name="Okada M."/>
            <person name="Plessy C."/>
            <person name="Shibata K."/>
            <person name="Shiraki T."/>
            <person name="Suzuki S."/>
            <person name="Tagami M."/>
            <person name="Waki K."/>
            <person name="Watahiki A."/>
            <person name="Okamura-Oho Y."/>
            <person name="Suzuki H."/>
            <person name="Kawai J."/>
            <person name="Hayashizaki Y."/>
        </authorList>
    </citation>
    <scope>NUCLEOTIDE SEQUENCE [LARGE SCALE MRNA]</scope>
    <source>
        <strain>C57BL/6J</strain>
        <tissue>Cerebellum</tissue>
        <tissue>Corpora quadrigemina</tissue>
        <tissue>Eye</tissue>
        <tissue>Head</tissue>
        <tissue>Spinal cord</tissue>
    </source>
</reference>
<reference key="2">
    <citation type="journal article" date="2004" name="Genome Res.">
        <title>The status, quality, and expansion of the NIH full-length cDNA project: the Mammalian Gene Collection (MGC).</title>
        <authorList>
            <consortium name="The MGC Project Team"/>
        </authorList>
    </citation>
    <scope>NUCLEOTIDE SEQUENCE [LARGE SCALE MRNA]</scope>
    <source>
        <strain>C57BL/6J</strain>
        <tissue>Brain</tissue>
    </source>
</reference>
<reference key="3">
    <citation type="journal article" date="2006" name="Mol. Cell. Proteomics">
        <title>Comprehensive identification of phosphorylation sites in postsynaptic density preparations.</title>
        <authorList>
            <person name="Trinidad J.C."/>
            <person name="Specht C.G."/>
            <person name="Thalhammer A."/>
            <person name="Schoepfer R."/>
            <person name="Burlingame A.L."/>
        </authorList>
    </citation>
    <scope>IDENTIFICATION BY MASS SPECTROMETRY [LARGE SCALE ANALYSIS]</scope>
    <source>
        <tissue>Brain</tissue>
    </source>
</reference>
<reference key="4">
    <citation type="journal article" date="2007" name="Gene">
        <title>Acheron, a novel member of the Lupus antigen family, is induced during the programmed cell death of skeletal muscles in the moth Manduca sexta.</title>
        <authorList>
            <person name="Valavanis C."/>
            <person name="Wang Z."/>
            <person name="Sun D."/>
            <person name="Vaine M."/>
            <person name="Schwartz L.M."/>
        </authorList>
    </citation>
    <scope>TISSUE SPECIFICITY</scope>
</reference>
<reference key="5">
    <citation type="journal article" date="2010" name="Cell">
        <title>A tissue-specific atlas of mouse protein phosphorylation and expression.</title>
        <authorList>
            <person name="Huttlin E.L."/>
            <person name="Jedrychowski M.P."/>
            <person name="Elias J.E."/>
            <person name="Goswami T."/>
            <person name="Rad R."/>
            <person name="Beausoleil S.A."/>
            <person name="Villen J."/>
            <person name="Haas W."/>
            <person name="Sowa M.E."/>
            <person name="Gygi S.P."/>
        </authorList>
    </citation>
    <scope>PHOSPHORYLATION [LARGE SCALE ANALYSIS] AT SER-56 AND SER-58</scope>
    <scope>IDENTIFICATION BY MASS SPECTROMETRY [LARGE SCALE ANALYSIS]</scope>
    <source>
        <tissue>Brain</tissue>
    </source>
</reference>
<gene>
    <name type="primary">Larp6</name>
</gene>
<feature type="initiator methionine" description="Removed" evidence="2">
    <location>
        <position position="1"/>
    </location>
</feature>
<feature type="chain" id="PRO_0000281142" description="La-related protein 6">
    <location>
        <begin position="2"/>
        <end position="492"/>
    </location>
</feature>
<feature type="domain" description="HTH La-type RNA-binding" evidence="3">
    <location>
        <begin position="86"/>
        <end position="177"/>
    </location>
</feature>
<feature type="domain" description="RRM">
    <location>
        <begin position="184"/>
        <end position="296"/>
    </location>
</feature>
<feature type="domain" description="SUZ-C" evidence="4">
    <location>
        <begin position="427"/>
        <end position="485"/>
    </location>
</feature>
<feature type="region of interest" description="Disordered" evidence="5">
    <location>
        <begin position="1"/>
        <end position="87"/>
    </location>
</feature>
<feature type="region of interest" description="Disordered" evidence="5">
    <location>
        <begin position="292"/>
        <end position="398"/>
    </location>
</feature>
<feature type="region of interest" description="Disordered" evidence="5">
    <location>
        <begin position="466"/>
        <end position="492"/>
    </location>
</feature>
<feature type="short sequence motif" description="Nuclear export signal" evidence="1">
    <location>
        <begin position="186"/>
        <end position="193"/>
    </location>
</feature>
<feature type="short sequence motif" description="Nuclear localization signal" evidence="1">
    <location>
        <begin position="296"/>
        <end position="302"/>
    </location>
</feature>
<feature type="compositionally biased region" description="Acidic residues" evidence="5">
    <location>
        <begin position="24"/>
        <end position="37"/>
    </location>
</feature>
<feature type="compositionally biased region" description="Polar residues" evidence="5">
    <location>
        <begin position="65"/>
        <end position="74"/>
    </location>
</feature>
<feature type="compositionally biased region" description="Low complexity" evidence="5">
    <location>
        <begin position="332"/>
        <end position="346"/>
    </location>
</feature>
<feature type="compositionally biased region" description="Polar residues" evidence="5">
    <location>
        <begin position="359"/>
        <end position="386"/>
    </location>
</feature>
<feature type="compositionally biased region" description="Basic and acidic residues" evidence="5">
    <location>
        <begin position="483"/>
        <end position="492"/>
    </location>
</feature>
<feature type="modified residue" description="N-acetylalanine" evidence="2">
    <location>
        <position position="2"/>
    </location>
</feature>
<feature type="modified residue" description="Phosphoserine" evidence="8">
    <location>
        <position position="56"/>
    </location>
</feature>
<feature type="modified residue" description="Phosphoserine" evidence="8">
    <location>
        <position position="58"/>
    </location>
</feature>
<feature type="sequence conflict" description="In Ref. 1; BAB30713." evidence="7" ref="1">
    <original>S</original>
    <variation>T</variation>
    <location>
        <position position="58"/>
    </location>
</feature>
<feature type="sequence conflict" description="In Ref. 1; BAC30400." evidence="7" ref="1">
    <original>E</original>
    <variation>D</variation>
    <location>
        <position position="107"/>
    </location>
</feature>
<feature type="sequence conflict" description="In Ref. 1; BAC31306." evidence="7" ref="1">
    <original>T</original>
    <variation>N</variation>
    <location>
        <position position="314"/>
    </location>
</feature>
<organism>
    <name type="scientific">Mus musculus</name>
    <name type="common">Mouse</name>
    <dbReference type="NCBI Taxonomy" id="10090"/>
    <lineage>
        <taxon>Eukaryota</taxon>
        <taxon>Metazoa</taxon>
        <taxon>Chordata</taxon>
        <taxon>Craniata</taxon>
        <taxon>Vertebrata</taxon>
        <taxon>Euteleostomi</taxon>
        <taxon>Mammalia</taxon>
        <taxon>Eutheria</taxon>
        <taxon>Euarchontoglires</taxon>
        <taxon>Glires</taxon>
        <taxon>Rodentia</taxon>
        <taxon>Myomorpha</taxon>
        <taxon>Muroidea</taxon>
        <taxon>Muridae</taxon>
        <taxon>Murinae</taxon>
        <taxon>Mus</taxon>
        <taxon>Mus</taxon>
    </lineage>
</organism>
<protein>
    <recommendedName>
        <fullName>La-related protein 6</fullName>
    </recommendedName>
    <alternativeName>
        <fullName>Acheron</fullName>
        <shortName>Achn</shortName>
    </alternativeName>
    <alternativeName>
        <fullName>La ribonucleoprotein domain family member 6</fullName>
    </alternativeName>
</protein>
<dbReference type="EMBL" id="AK017372">
    <property type="protein sequence ID" value="BAB30713.1"/>
    <property type="molecule type" value="mRNA"/>
</dbReference>
<dbReference type="EMBL" id="AK020966">
    <property type="protein sequence ID" value="BAB32263.1"/>
    <property type="molecule type" value="mRNA"/>
</dbReference>
<dbReference type="EMBL" id="AK039614">
    <property type="protein sequence ID" value="BAC30400.1"/>
    <property type="molecule type" value="mRNA"/>
</dbReference>
<dbReference type="EMBL" id="AK042616">
    <property type="protein sequence ID" value="BAC31306.1"/>
    <property type="molecule type" value="mRNA"/>
</dbReference>
<dbReference type="EMBL" id="AK087521">
    <property type="protein sequence ID" value="BAC39909.1"/>
    <property type="molecule type" value="mRNA"/>
</dbReference>
<dbReference type="EMBL" id="BC090615">
    <property type="protein sequence ID" value="AAH90615.1"/>
    <property type="molecule type" value="mRNA"/>
</dbReference>
<dbReference type="CCDS" id="CCDS23258.1"/>
<dbReference type="RefSeq" id="NP_080511.2">
    <property type="nucleotide sequence ID" value="NM_026235.4"/>
</dbReference>
<dbReference type="SMR" id="Q8BN59"/>
<dbReference type="BioGRID" id="212276">
    <property type="interactions" value="1"/>
</dbReference>
<dbReference type="FunCoup" id="Q8BN59">
    <property type="interactions" value="67"/>
</dbReference>
<dbReference type="STRING" id="10090.ENSMUSP00000040309"/>
<dbReference type="iPTMnet" id="Q8BN59"/>
<dbReference type="PhosphoSitePlus" id="Q8BN59"/>
<dbReference type="PaxDb" id="10090-ENSMUSP00000040309"/>
<dbReference type="ProteomicsDB" id="265043"/>
<dbReference type="Antibodypedia" id="14073">
    <property type="antibodies" value="124 antibodies from 19 providers"/>
</dbReference>
<dbReference type="DNASU" id="67557"/>
<dbReference type="Ensembl" id="ENSMUST00000038407.6">
    <property type="protein sequence ID" value="ENSMUSP00000040309.6"/>
    <property type="gene ID" value="ENSMUSG00000034839.6"/>
</dbReference>
<dbReference type="GeneID" id="67557"/>
<dbReference type="KEGG" id="mmu:67557"/>
<dbReference type="UCSC" id="uc009pzh.1">
    <property type="organism name" value="mouse"/>
</dbReference>
<dbReference type="AGR" id="MGI:1914807"/>
<dbReference type="CTD" id="55323"/>
<dbReference type="MGI" id="MGI:1914807">
    <property type="gene designation" value="Larp6"/>
</dbReference>
<dbReference type="VEuPathDB" id="HostDB:ENSMUSG00000034839"/>
<dbReference type="eggNOG" id="KOG1855">
    <property type="taxonomic scope" value="Eukaryota"/>
</dbReference>
<dbReference type="GeneTree" id="ENSGT00940000159103"/>
<dbReference type="HOGENOM" id="CLU_015330_1_0_1"/>
<dbReference type="InParanoid" id="Q8BN59"/>
<dbReference type="OMA" id="WIGGLWR"/>
<dbReference type="OrthoDB" id="435402at2759"/>
<dbReference type="PhylomeDB" id="Q8BN59"/>
<dbReference type="TreeFam" id="TF326594"/>
<dbReference type="BioGRID-ORCS" id="67557">
    <property type="hits" value="2 hits in 76 CRISPR screens"/>
</dbReference>
<dbReference type="PRO" id="PR:Q8BN59"/>
<dbReference type="Proteomes" id="UP000000589">
    <property type="component" value="Chromosome 9"/>
</dbReference>
<dbReference type="RNAct" id="Q8BN59">
    <property type="molecule type" value="protein"/>
</dbReference>
<dbReference type="Bgee" id="ENSMUSG00000034839">
    <property type="expression patterns" value="Expressed in pontine nuclear group and 171 other cell types or tissues"/>
</dbReference>
<dbReference type="GO" id="GO:0005737">
    <property type="term" value="C:cytoplasm"/>
    <property type="evidence" value="ECO:0000250"/>
    <property type="project" value="UniProtKB"/>
</dbReference>
<dbReference type="GO" id="GO:0005634">
    <property type="term" value="C:nucleus"/>
    <property type="evidence" value="ECO:0007669"/>
    <property type="project" value="UniProtKB-SubCell"/>
</dbReference>
<dbReference type="GO" id="GO:1990904">
    <property type="term" value="C:ribonucleoprotein complex"/>
    <property type="evidence" value="ECO:0007669"/>
    <property type="project" value="InterPro"/>
</dbReference>
<dbReference type="GO" id="GO:0048027">
    <property type="term" value="F:mRNA 5'-UTR binding"/>
    <property type="evidence" value="ECO:0000250"/>
    <property type="project" value="UniProtKB"/>
</dbReference>
<dbReference type="GO" id="GO:0017022">
    <property type="term" value="F:myosin binding"/>
    <property type="evidence" value="ECO:0007669"/>
    <property type="project" value="Ensembl"/>
</dbReference>
<dbReference type="GO" id="GO:0035613">
    <property type="term" value="F:RNA stem-loop binding"/>
    <property type="evidence" value="ECO:0007669"/>
    <property type="project" value="Ensembl"/>
</dbReference>
<dbReference type="GO" id="GO:1990825">
    <property type="term" value="F:sequence-specific mRNA binding"/>
    <property type="evidence" value="ECO:0000250"/>
    <property type="project" value="UniProtKB"/>
</dbReference>
<dbReference type="GO" id="GO:0032967">
    <property type="term" value="P:positive regulation of collagen biosynthetic process"/>
    <property type="evidence" value="ECO:0007669"/>
    <property type="project" value="Ensembl"/>
</dbReference>
<dbReference type="GO" id="GO:0006417">
    <property type="term" value="P:regulation of translation"/>
    <property type="evidence" value="ECO:0007669"/>
    <property type="project" value="UniProtKB-KW"/>
</dbReference>
<dbReference type="GO" id="GO:0006396">
    <property type="term" value="P:RNA processing"/>
    <property type="evidence" value="ECO:0007669"/>
    <property type="project" value="InterPro"/>
</dbReference>
<dbReference type="CDD" id="cd08033">
    <property type="entry name" value="LARP_6"/>
    <property type="match status" value="1"/>
</dbReference>
<dbReference type="CDD" id="cd12289">
    <property type="entry name" value="RRM_LARP6"/>
    <property type="match status" value="1"/>
</dbReference>
<dbReference type="FunFam" id="1.10.10.10:FF:000158">
    <property type="entry name" value="La ribonucleoprotein domain family member 7"/>
    <property type="match status" value="1"/>
</dbReference>
<dbReference type="Gene3D" id="3.30.70.330">
    <property type="match status" value="1"/>
</dbReference>
<dbReference type="Gene3D" id="1.10.10.10">
    <property type="entry name" value="Winged helix-like DNA-binding domain superfamily/Winged helix DNA-binding domain"/>
    <property type="match status" value="1"/>
</dbReference>
<dbReference type="InterPro" id="IPR045180">
    <property type="entry name" value="La_dom_prot"/>
</dbReference>
<dbReference type="InterPro" id="IPR006630">
    <property type="entry name" value="La_HTH"/>
</dbReference>
<dbReference type="InterPro" id="IPR034880">
    <property type="entry name" value="LARP6_RRM"/>
</dbReference>
<dbReference type="InterPro" id="IPR002344">
    <property type="entry name" value="Lupus_La"/>
</dbReference>
<dbReference type="InterPro" id="IPR012677">
    <property type="entry name" value="Nucleotide-bd_a/b_plait_sf"/>
</dbReference>
<dbReference type="InterPro" id="IPR035979">
    <property type="entry name" value="RBD_domain_sf"/>
</dbReference>
<dbReference type="InterPro" id="IPR024642">
    <property type="entry name" value="SUZ-C"/>
</dbReference>
<dbReference type="InterPro" id="IPR036388">
    <property type="entry name" value="WH-like_DNA-bd_sf"/>
</dbReference>
<dbReference type="InterPro" id="IPR036390">
    <property type="entry name" value="WH_DNA-bd_sf"/>
</dbReference>
<dbReference type="PANTHER" id="PTHR22792:SF71">
    <property type="entry name" value="LA-RELATED PROTEIN 6"/>
    <property type="match status" value="1"/>
</dbReference>
<dbReference type="PANTHER" id="PTHR22792">
    <property type="entry name" value="LUPUS LA PROTEIN-RELATED"/>
    <property type="match status" value="1"/>
</dbReference>
<dbReference type="Pfam" id="PF05383">
    <property type="entry name" value="La"/>
    <property type="match status" value="1"/>
</dbReference>
<dbReference type="Pfam" id="PF12901">
    <property type="entry name" value="SUZ-C"/>
    <property type="match status" value="1"/>
</dbReference>
<dbReference type="PRINTS" id="PR00302">
    <property type="entry name" value="LUPUSLA"/>
</dbReference>
<dbReference type="SMART" id="SM00715">
    <property type="entry name" value="LA"/>
    <property type="match status" value="1"/>
</dbReference>
<dbReference type="SUPFAM" id="SSF54928">
    <property type="entry name" value="RNA-binding domain, RBD"/>
    <property type="match status" value="1"/>
</dbReference>
<dbReference type="SUPFAM" id="SSF46785">
    <property type="entry name" value="Winged helix' DNA-binding domain"/>
    <property type="match status" value="1"/>
</dbReference>
<dbReference type="PROSITE" id="PS50961">
    <property type="entry name" value="HTH_LA"/>
    <property type="match status" value="1"/>
</dbReference>
<dbReference type="PROSITE" id="PS51938">
    <property type="entry name" value="SUZ_C"/>
    <property type="match status" value="1"/>
</dbReference>